<evidence type="ECO:0000255" key="1">
    <source>
        <dbReference type="HAMAP-Rule" id="MF_00402"/>
    </source>
</evidence>
<evidence type="ECO:0000305" key="2"/>
<protein>
    <recommendedName>
        <fullName evidence="1">Large ribosomal subunit protein bL19</fullName>
    </recommendedName>
    <alternativeName>
        <fullName evidence="2">50S ribosomal protein L19</fullName>
    </alternativeName>
</protein>
<sequence length="115" mass="13146">MNPLIQSLTEGQLRSDIPEFRAGDTVRVHAKVVEGTRERIQIFEGVVISRKGQGISEMYTVRKISGGIGVERTFPIHTPRVDKIEVVRYGKVRRAKLYYLRALQGKAARIKEIRR</sequence>
<comment type="function">
    <text evidence="1">This protein is located at the 30S-50S ribosomal subunit interface and may play a role in the structure and function of the aminoacyl-tRNA binding site.</text>
</comment>
<comment type="similarity">
    <text evidence="1">Belongs to the bacterial ribosomal protein bL19 family.</text>
</comment>
<accession>Q8E6H6</accession>
<gene>
    <name evidence="1" type="primary">rplS</name>
    <name type="ordered locus">gbs0587</name>
</gene>
<proteinExistence type="inferred from homology"/>
<organism>
    <name type="scientific">Streptococcus agalactiae serotype III (strain NEM316)</name>
    <dbReference type="NCBI Taxonomy" id="211110"/>
    <lineage>
        <taxon>Bacteria</taxon>
        <taxon>Bacillati</taxon>
        <taxon>Bacillota</taxon>
        <taxon>Bacilli</taxon>
        <taxon>Lactobacillales</taxon>
        <taxon>Streptococcaceae</taxon>
        <taxon>Streptococcus</taxon>
    </lineage>
</organism>
<keyword id="KW-0687">Ribonucleoprotein</keyword>
<keyword id="KW-0689">Ribosomal protein</keyword>
<name>RL19_STRA3</name>
<reference key="1">
    <citation type="journal article" date="2002" name="Mol. Microbiol.">
        <title>Genome sequence of Streptococcus agalactiae, a pathogen causing invasive neonatal disease.</title>
        <authorList>
            <person name="Glaser P."/>
            <person name="Rusniok C."/>
            <person name="Buchrieser C."/>
            <person name="Chevalier F."/>
            <person name="Frangeul L."/>
            <person name="Msadek T."/>
            <person name="Zouine M."/>
            <person name="Couve E."/>
            <person name="Lalioui L."/>
            <person name="Poyart C."/>
            <person name="Trieu-Cuot P."/>
            <person name="Kunst F."/>
        </authorList>
    </citation>
    <scope>NUCLEOTIDE SEQUENCE [LARGE SCALE GENOMIC DNA]</scope>
    <source>
        <strain>NEM316</strain>
    </source>
</reference>
<dbReference type="EMBL" id="AL766846">
    <property type="protein sequence ID" value="CAD46231.1"/>
    <property type="molecule type" value="Genomic_DNA"/>
</dbReference>
<dbReference type="RefSeq" id="WP_001068667.1">
    <property type="nucleotide sequence ID" value="NC_004368.1"/>
</dbReference>
<dbReference type="SMR" id="Q8E6H6"/>
<dbReference type="GeneID" id="93825928"/>
<dbReference type="KEGG" id="san:gbs0587"/>
<dbReference type="eggNOG" id="COG0335">
    <property type="taxonomic scope" value="Bacteria"/>
</dbReference>
<dbReference type="HOGENOM" id="CLU_103507_2_1_9"/>
<dbReference type="Proteomes" id="UP000000823">
    <property type="component" value="Chromosome"/>
</dbReference>
<dbReference type="GO" id="GO:0022625">
    <property type="term" value="C:cytosolic large ribosomal subunit"/>
    <property type="evidence" value="ECO:0007669"/>
    <property type="project" value="TreeGrafter"/>
</dbReference>
<dbReference type="GO" id="GO:0003735">
    <property type="term" value="F:structural constituent of ribosome"/>
    <property type="evidence" value="ECO:0007669"/>
    <property type="project" value="InterPro"/>
</dbReference>
<dbReference type="GO" id="GO:0006412">
    <property type="term" value="P:translation"/>
    <property type="evidence" value="ECO:0007669"/>
    <property type="project" value="UniProtKB-UniRule"/>
</dbReference>
<dbReference type="FunFam" id="2.30.30.790:FF:000001">
    <property type="entry name" value="50S ribosomal protein L19"/>
    <property type="match status" value="1"/>
</dbReference>
<dbReference type="Gene3D" id="2.30.30.790">
    <property type="match status" value="1"/>
</dbReference>
<dbReference type="HAMAP" id="MF_00402">
    <property type="entry name" value="Ribosomal_bL19"/>
    <property type="match status" value="1"/>
</dbReference>
<dbReference type="InterPro" id="IPR001857">
    <property type="entry name" value="Ribosomal_bL19"/>
</dbReference>
<dbReference type="InterPro" id="IPR018257">
    <property type="entry name" value="Ribosomal_bL19_CS"/>
</dbReference>
<dbReference type="InterPro" id="IPR038657">
    <property type="entry name" value="Ribosomal_bL19_sf"/>
</dbReference>
<dbReference type="InterPro" id="IPR008991">
    <property type="entry name" value="Translation_prot_SH3-like_sf"/>
</dbReference>
<dbReference type="NCBIfam" id="TIGR01024">
    <property type="entry name" value="rplS_bact"/>
    <property type="match status" value="1"/>
</dbReference>
<dbReference type="PANTHER" id="PTHR15680:SF9">
    <property type="entry name" value="LARGE RIBOSOMAL SUBUNIT PROTEIN BL19M"/>
    <property type="match status" value="1"/>
</dbReference>
<dbReference type="PANTHER" id="PTHR15680">
    <property type="entry name" value="RIBOSOMAL PROTEIN L19"/>
    <property type="match status" value="1"/>
</dbReference>
<dbReference type="Pfam" id="PF01245">
    <property type="entry name" value="Ribosomal_L19"/>
    <property type="match status" value="1"/>
</dbReference>
<dbReference type="PIRSF" id="PIRSF002191">
    <property type="entry name" value="Ribosomal_L19"/>
    <property type="match status" value="1"/>
</dbReference>
<dbReference type="PRINTS" id="PR00061">
    <property type="entry name" value="RIBOSOMALL19"/>
</dbReference>
<dbReference type="SUPFAM" id="SSF50104">
    <property type="entry name" value="Translation proteins SH3-like domain"/>
    <property type="match status" value="1"/>
</dbReference>
<dbReference type="PROSITE" id="PS01015">
    <property type="entry name" value="RIBOSOMAL_L19"/>
    <property type="match status" value="1"/>
</dbReference>
<feature type="chain" id="PRO_0000163536" description="Large ribosomal subunit protein bL19">
    <location>
        <begin position="1"/>
        <end position="115"/>
    </location>
</feature>